<name>MGLB_HAEIN</name>
<sequence length="331" mass="35518">MKKTAVLSTVAFAIALGSASASFAADNRIGVTIYKYDDNFMSLMRKEIDKEAKVVGGIKLLMNDSQNAQSIQNDQVDILLSKGVKALAINLVDPAAAPTIIGKAKSDNIPVVFFNKDPGAKAIGSYEQAYYVGTDPKESGLIQGDLIAKQWKANPALDLNKDGKIQFVLLKGEPGHPDAEVRTKYVIEELNAKGIQTEQLFIDTGMWDAAMAKDKVDAWLSSSKANDIEVIISNNDGMALGALEATKAHGKKLPIFGVDALPEALQLISKGELAGTVLNDSVNQGKAVVQLSNNLAQGKSATEGTKWELKDRVVRIPYVGVDKDNLGDFLK</sequence>
<gene>
    <name type="primary">mglB</name>
    <name type="ordered locus">HI_0822</name>
</gene>
<organism>
    <name type="scientific">Haemophilus influenzae (strain ATCC 51907 / DSM 11121 / KW20 / Rd)</name>
    <dbReference type="NCBI Taxonomy" id="71421"/>
    <lineage>
        <taxon>Bacteria</taxon>
        <taxon>Pseudomonadati</taxon>
        <taxon>Pseudomonadota</taxon>
        <taxon>Gammaproteobacteria</taxon>
        <taxon>Pasteurellales</taxon>
        <taxon>Pasteurellaceae</taxon>
        <taxon>Haemophilus</taxon>
    </lineage>
</organism>
<comment type="function">
    <text evidence="2">Part of the ABC transporter complex MglABC involved in galactose/methyl galactoside import.</text>
</comment>
<comment type="subunit">
    <text evidence="2">The ABC transporter complex is composed of one ATP-binding protein (MglA), two transmembrane proteins (MglC) and a solute-binding protein (MglB).</text>
</comment>
<comment type="subcellular location">
    <subcellularLocation>
        <location evidence="1">Periplasm</location>
    </subcellularLocation>
</comment>
<comment type="domain">
    <text evidence="1">The calcium-binding site is structurally similar to that of EF-hand proteins, but is in two parts, with the last calcium ligand provided by Glu-229.</text>
</comment>
<comment type="similarity">
    <text evidence="5">Belongs to the bacterial solute-binding protein 2 family.</text>
</comment>
<comment type="sequence caution" evidence="5">
    <conflict type="erroneous initiation">
        <sequence resource="EMBL-CDS" id="AAC22481"/>
    </conflict>
</comment>
<evidence type="ECO:0000250" key="1"/>
<evidence type="ECO:0000250" key="2">
    <source>
        <dbReference type="UniProtKB" id="P0AEE5"/>
    </source>
</evidence>
<evidence type="ECO:0000250" key="3">
    <source>
        <dbReference type="UniProtKB" id="P23905"/>
    </source>
</evidence>
<evidence type="ECO:0000269" key="4">
    <source>
    </source>
</evidence>
<evidence type="ECO:0000305" key="5"/>
<dbReference type="EMBL" id="L42023">
    <property type="protein sequence ID" value="AAC22481.1"/>
    <property type="status" value="ALT_INIT"/>
    <property type="molecule type" value="Genomic_DNA"/>
</dbReference>
<dbReference type="PIR" id="G64096">
    <property type="entry name" value="G64096"/>
</dbReference>
<dbReference type="RefSeq" id="NP_438982.2">
    <property type="nucleotide sequence ID" value="NC_000907.1"/>
</dbReference>
<dbReference type="SMR" id="P44883"/>
<dbReference type="STRING" id="71421.HI_0822"/>
<dbReference type="EnsemblBacteria" id="AAC22481">
    <property type="protein sequence ID" value="AAC22481"/>
    <property type="gene ID" value="HI_0822"/>
</dbReference>
<dbReference type="KEGG" id="hin:HI_0822"/>
<dbReference type="PATRIC" id="fig|71421.8.peg.863"/>
<dbReference type="eggNOG" id="COG1879">
    <property type="taxonomic scope" value="Bacteria"/>
</dbReference>
<dbReference type="HOGENOM" id="CLU_037628_3_1_6"/>
<dbReference type="OrthoDB" id="9769193at2"/>
<dbReference type="PhylomeDB" id="P44883"/>
<dbReference type="BioCyc" id="HINF71421:G1GJ1-863-MONOMER"/>
<dbReference type="Proteomes" id="UP000000579">
    <property type="component" value="Chromosome"/>
</dbReference>
<dbReference type="GO" id="GO:0030288">
    <property type="term" value="C:outer membrane-bounded periplasmic space"/>
    <property type="evidence" value="ECO:0000318"/>
    <property type="project" value="GO_Central"/>
</dbReference>
<dbReference type="GO" id="GO:0030246">
    <property type="term" value="F:carbohydrate binding"/>
    <property type="evidence" value="ECO:0000318"/>
    <property type="project" value="GO_Central"/>
</dbReference>
<dbReference type="GO" id="GO:0046872">
    <property type="term" value="F:metal ion binding"/>
    <property type="evidence" value="ECO:0007669"/>
    <property type="project" value="UniProtKB-KW"/>
</dbReference>
<dbReference type="CDD" id="cd01539">
    <property type="entry name" value="PBP1_GGBP"/>
    <property type="match status" value="1"/>
</dbReference>
<dbReference type="FunFam" id="3.40.50.2300:FF:000038">
    <property type="entry name" value="Galactose ABC transporter substrate-binding protein"/>
    <property type="match status" value="1"/>
</dbReference>
<dbReference type="Gene3D" id="3.40.50.2300">
    <property type="match status" value="2"/>
</dbReference>
<dbReference type="InterPro" id="IPR050555">
    <property type="entry name" value="Bact_Solute-Bind_Prot2"/>
</dbReference>
<dbReference type="InterPro" id="IPR044085">
    <property type="entry name" value="MglB-like_PBP1"/>
</dbReference>
<dbReference type="InterPro" id="IPR028082">
    <property type="entry name" value="Peripla_BP_I"/>
</dbReference>
<dbReference type="InterPro" id="IPR025997">
    <property type="entry name" value="SBP_2_dom"/>
</dbReference>
<dbReference type="NCBIfam" id="NF011924">
    <property type="entry name" value="PRK15395.1"/>
    <property type="match status" value="1"/>
</dbReference>
<dbReference type="PANTHER" id="PTHR30036:SF2">
    <property type="entry name" value="D-GALACTOSE_METHYL-GALACTOSIDE BINDING PERIPLASMIC PROTEIN MGLB"/>
    <property type="match status" value="1"/>
</dbReference>
<dbReference type="PANTHER" id="PTHR30036">
    <property type="entry name" value="D-XYLOSE-BINDING PERIPLASMIC PROTEIN"/>
    <property type="match status" value="1"/>
</dbReference>
<dbReference type="Pfam" id="PF13407">
    <property type="entry name" value="Peripla_BP_4"/>
    <property type="match status" value="1"/>
</dbReference>
<dbReference type="SUPFAM" id="SSF53822">
    <property type="entry name" value="Periplasmic binding protein-like I"/>
    <property type="match status" value="1"/>
</dbReference>
<protein>
    <recommendedName>
        <fullName evidence="2">D-galactose/methyl-galactoside binding periplasmic protein MglB</fullName>
    </recommendedName>
</protein>
<keyword id="KW-0106">Calcium</keyword>
<keyword id="KW-0903">Direct protein sequencing</keyword>
<keyword id="KW-0479">Metal-binding</keyword>
<keyword id="KW-0574">Periplasm</keyword>
<keyword id="KW-1185">Reference proteome</keyword>
<keyword id="KW-0732">Signal</keyword>
<keyword id="KW-0762">Sugar transport</keyword>
<keyword id="KW-0813">Transport</keyword>
<accession>P44883</accession>
<reference key="1">
    <citation type="journal article" date="1995" name="Science">
        <title>Whole-genome random sequencing and assembly of Haemophilus influenzae Rd.</title>
        <authorList>
            <person name="Fleischmann R.D."/>
            <person name="Adams M.D."/>
            <person name="White O."/>
            <person name="Clayton R.A."/>
            <person name="Kirkness E.F."/>
            <person name="Kerlavage A.R."/>
            <person name="Bult C.J."/>
            <person name="Tomb J.-F."/>
            <person name="Dougherty B.A."/>
            <person name="Merrick J.M."/>
            <person name="McKenney K."/>
            <person name="Sutton G.G."/>
            <person name="FitzHugh W."/>
            <person name="Fields C.A."/>
            <person name="Gocayne J.D."/>
            <person name="Scott J.D."/>
            <person name="Shirley R."/>
            <person name="Liu L.-I."/>
            <person name="Glodek A."/>
            <person name="Kelley J.M."/>
            <person name="Weidman J.F."/>
            <person name="Phillips C.A."/>
            <person name="Spriggs T."/>
            <person name="Hedblom E."/>
            <person name="Cotton M.D."/>
            <person name="Utterback T.R."/>
            <person name="Hanna M.C."/>
            <person name="Nguyen D.T."/>
            <person name="Saudek D.M."/>
            <person name="Brandon R.C."/>
            <person name="Fine L.D."/>
            <person name="Fritchman J.L."/>
            <person name="Fuhrmann J.L."/>
            <person name="Geoghagen N.S.M."/>
            <person name="Gnehm C.L."/>
            <person name="McDonald L.A."/>
            <person name="Small K.V."/>
            <person name="Fraser C.M."/>
            <person name="Smith H.O."/>
            <person name="Venter J.C."/>
        </authorList>
    </citation>
    <scope>NUCLEOTIDE SEQUENCE [LARGE SCALE GENOMIC DNA]</scope>
    <source>
        <strain>ATCC 51907 / DSM 11121 / KW20 / Rd</strain>
    </source>
</reference>
<reference key="2">
    <citation type="journal article" date="2000" name="Electrophoresis">
        <title>Two-dimensional map of the proteome of Haemophilus influenzae.</title>
        <authorList>
            <person name="Langen H."/>
            <person name="Takacs B."/>
            <person name="Evers S."/>
            <person name="Berndt P."/>
            <person name="Lahm H.W."/>
            <person name="Wipf B."/>
            <person name="Gray C."/>
            <person name="Fountoulakis M."/>
        </authorList>
    </citation>
    <scope>PROTEIN SEQUENCE OF 25-29</scope>
    <source>
        <strain>ATCC 51907 / DSM 11121 / KW20 / Rd</strain>
    </source>
</reference>
<proteinExistence type="evidence at protein level"/>
<feature type="signal peptide" evidence="4">
    <location>
        <begin position="1"/>
        <end position="24"/>
    </location>
</feature>
<feature type="chain" id="PRO_0000031724" description="D-galactose/methyl-galactoside binding periplasmic protein MglB">
    <location>
        <begin position="25"/>
        <end position="331"/>
    </location>
</feature>
<feature type="binding site" evidence="3">
    <location>
        <position position="38"/>
    </location>
    <ligand>
        <name>beta-D-galactose</name>
        <dbReference type="ChEBI" id="CHEBI:27667"/>
    </ligand>
</feature>
<feature type="binding site" evidence="2">
    <location>
        <position position="38"/>
    </location>
    <ligand>
        <name>beta-D-glucose</name>
        <dbReference type="ChEBI" id="CHEBI:15903"/>
    </ligand>
</feature>
<feature type="binding site" evidence="3">
    <location>
        <position position="115"/>
    </location>
    <ligand>
        <name>beta-D-galactose</name>
        <dbReference type="ChEBI" id="CHEBI:27667"/>
    </ligand>
</feature>
<feature type="binding site" evidence="2">
    <location>
        <position position="115"/>
    </location>
    <ligand>
        <name>beta-D-glucose</name>
        <dbReference type="ChEBI" id="CHEBI:15903"/>
    </ligand>
</feature>
<feature type="binding site" evidence="3">
    <location>
        <position position="158"/>
    </location>
    <ligand>
        <name>Ca(2+)</name>
        <dbReference type="ChEBI" id="CHEBI:29108"/>
    </ligand>
</feature>
<feature type="binding site" evidence="3">
    <location>
        <position position="160"/>
    </location>
    <ligand>
        <name>Ca(2+)</name>
        <dbReference type="ChEBI" id="CHEBI:29108"/>
    </ligand>
</feature>
<feature type="binding site" evidence="3">
    <location>
        <position position="162"/>
    </location>
    <ligand>
        <name>Ca(2+)</name>
        <dbReference type="ChEBI" id="CHEBI:29108"/>
    </ligand>
</feature>
<feature type="binding site" evidence="3">
    <location>
        <position position="164"/>
    </location>
    <ligand>
        <name>Ca(2+)</name>
        <dbReference type="ChEBI" id="CHEBI:29108"/>
    </ligand>
</feature>
<feature type="binding site" evidence="3">
    <location>
        <position position="166"/>
    </location>
    <ligand>
        <name>Ca(2+)</name>
        <dbReference type="ChEBI" id="CHEBI:29108"/>
    </ligand>
</feature>
<feature type="binding site" evidence="3">
    <location>
        <position position="176"/>
    </location>
    <ligand>
        <name>beta-D-galactose</name>
        <dbReference type="ChEBI" id="CHEBI:27667"/>
    </ligand>
</feature>
<feature type="binding site" evidence="2">
    <location>
        <position position="176"/>
    </location>
    <ligand>
        <name>beta-D-glucose</name>
        <dbReference type="ChEBI" id="CHEBI:15903"/>
    </ligand>
</feature>
<feature type="binding site" evidence="3">
    <location>
        <position position="178"/>
    </location>
    <ligand>
        <name>beta-D-galactose</name>
        <dbReference type="ChEBI" id="CHEBI:27667"/>
    </ligand>
</feature>
<feature type="binding site" evidence="2">
    <location>
        <position position="178"/>
    </location>
    <ligand>
        <name>beta-D-glucose</name>
        <dbReference type="ChEBI" id="CHEBI:15903"/>
    </ligand>
</feature>
<feature type="binding site" evidence="3">
    <location>
        <position position="182"/>
    </location>
    <ligand>
        <name>beta-D-galactose</name>
        <dbReference type="ChEBI" id="CHEBI:27667"/>
    </ligand>
</feature>
<feature type="binding site" evidence="2">
    <location>
        <position position="182"/>
    </location>
    <ligand>
        <name>beta-D-glucose</name>
        <dbReference type="ChEBI" id="CHEBI:15903"/>
    </ligand>
</feature>
<feature type="binding site" evidence="3">
    <location>
        <position position="229"/>
    </location>
    <ligand>
        <name>Ca(2+)</name>
        <dbReference type="ChEBI" id="CHEBI:29108"/>
    </ligand>
</feature>
<feature type="binding site" evidence="3">
    <location>
        <position position="235"/>
    </location>
    <ligand>
        <name>beta-D-galactose</name>
        <dbReference type="ChEBI" id="CHEBI:27667"/>
    </ligand>
</feature>
<feature type="binding site" evidence="2">
    <location>
        <position position="235"/>
    </location>
    <ligand>
        <name>beta-D-glucose</name>
        <dbReference type="ChEBI" id="CHEBI:15903"/>
    </ligand>
</feature>
<feature type="binding site" evidence="3">
    <location>
        <position position="259"/>
    </location>
    <ligand>
        <name>beta-D-galactose</name>
        <dbReference type="ChEBI" id="CHEBI:27667"/>
    </ligand>
</feature>
<feature type="binding site" evidence="2">
    <location>
        <position position="259"/>
    </location>
    <ligand>
        <name>beta-D-glucose</name>
        <dbReference type="ChEBI" id="CHEBI:15903"/>
    </ligand>
</feature>
<feature type="binding site" evidence="3">
    <location>
        <position position="279"/>
    </location>
    <ligand>
        <name>beta-D-galactose</name>
        <dbReference type="ChEBI" id="CHEBI:27667"/>
    </ligand>
</feature>
<feature type="binding site" evidence="2">
    <location>
        <position position="279"/>
    </location>
    <ligand>
        <name>beta-D-glucose</name>
        <dbReference type="ChEBI" id="CHEBI:15903"/>
    </ligand>
</feature>